<reference key="1">
    <citation type="journal article" date="1997" name="Science">
        <title>The complete genome sequence of Escherichia coli K-12.</title>
        <authorList>
            <person name="Blattner F.R."/>
            <person name="Plunkett G. III"/>
            <person name="Bloch C.A."/>
            <person name="Perna N.T."/>
            <person name="Burland V."/>
            <person name="Riley M."/>
            <person name="Collado-Vides J."/>
            <person name="Glasner J.D."/>
            <person name="Rode C.K."/>
            <person name="Mayhew G.F."/>
            <person name="Gregor J."/>
            <person name="Davis N.W."/>
            <person name="Kirkpatrick H.A."/>
            <person name="Goeden M.A."/>
            <person name="Rose D.J."/>
            <person name="Mau B."/>
            <person name="Shao Y."/>
        </authorList>
    </citation>
    <scope>NUCLEOTIDE SEQUENCE [LARGE SCALE GENOMIC DNA]</scope>
    <source>
        <strain>K12 / MG1655 / ATCC 47076</strain>
    </source>
</reference>
<reference key="2">
    <citation type="journal article" date="2006" name="Mol. Syst. Biol.">
        <title>Highly accurate genome sequences of Escherichia coli K-12 strains MG1655 and W3110.</title>
        <authorList>
            <person name="Hayashi K."/>
            <person name="Morooka N."/>
            <person name="Yamamoto Y."/>
            <person name="Fujita K."/>
            <person name="Isono K."/>
            <person name="Choi S."/>
            <person name="Ohtsubo E."/>
            <person name="Baba T."/>
            <person name="Wanner B.L."/>
            <person name="Mori H."/>
            <person name="Horiuchi T."/>
        </authorList>
    </citation>
    <scope>NUCLEOTIDE SEQUENCE [LARGE SCALE GENOMIC DNA]</scope>
    <source>
        <strain>K12 / W3110 / ATCC 27325 / DSM 5911</strain>
    </source>
</reference>
<reference key="3">
    <citation type="journal article" date="1995" name="J. Biol. Chem.">
        <title>Glutathionylspermidine metabolism in Escherichia coli. Purification, cloning, overproduction, and characterization of a bifunctional glutathionylspermidine synthetase/amidase.</title>
        <authorList>
            <person name="Bollinger J.M. Jr."/>
            <person name="Kwon D.S."/>
            <person name="Huisman G.W."/>
            <person name="Kolter R."/>
            <person name="Walsh C.T."/>
        </authorList>
    </citation>
    <scope>NUCLEOTIDE SEQUENCE [GENOMIC DNA] OF 1-217</scope>
    <source>
        <strain>K12</strain>
    </source>
</reference>
<reference key="4">
    <citation type="journal article" date="2001" name="J. Bacteriol.">
        <title>Characterization of PitA and PitB from Escherichia coli.</title>
        <authorList>
            <person name="Harris R.M."/>
            <person name="Webb D.C."/>
            <person name="Howitt S.M."/>
            <person name="Cox G.B."/>
        </authorList>
    </citation>
    <scope>FUNCTION</scope>
    <scope>BIOPHYSICOCHEMICAL PROPERTIES</scope>
    <scope>SUBCELLULAR LOCATION</scope>
    <scope>INDUCTION</scope>
    <source>
        <strain>K12</strain>
    </source>
</reference>
<reference key="5">
    <citation type="journal article" date="2005" name="Science">
        <title>Global topology analysis of the Escherichia coli inner membrane proteome.</title>
        <authorList>
            <person name="Daley D.O."/>
            <person name="Rapp M."/>
            <person name="Granseth E."/>
            <person name="Melen K."/>
            <person name="Drew D."/>
            <person name="von Heijne G."/>
        </authorList>
    </citation>
    <scope>SUBCELLULAR LOCATION</scope>
    <source>
        <strain>K12 / MG1655 / ATCC 47076</strain>
    </source>
</reference>
<reference key="6">
    <citation type="journal article" date="2012" name="MicrobiologyOpen">
        <title>Tellurite enters Escherichia coli mainly through the PitA phosphate transporter.</title>
        <authorList>
            <person name="Elias A.O."/>
            <person name="Abarca M.J."/>
            <person name="Montes R.A."/>
            <person name="Chasteen T.G."/>
            <person name="Perez-Donoso J.M."/>
            <person name="Vasquez C.C."/>
        </authorList>
    </citation>
    <scope>DISRUPTION PHENOTYPE</scope>
</reference>
<organism>
    <name type="scientific">Escherichia coli (strain K12)</name>
    <dbReference type="NCBI Taxonomy" id="83333"/>
    <lineage>
        <taxon>Bacteria</taxon>
        <taxon>Pseudomonadati</taxon>
        <taxon>Pseudomonadota</taxon>
        <taxon>Gammaproteobacteria</taxon>
        <taxon>Enterobacterales</taxon>
        <taxon>Enterobacteriaceae</taxon>
        <taxon>Escherichia</taxon>
    </lineage>
</organism>
<name>PITB_ECOLI</name>
<sequence>MLNLFVGLDIYTGLLLLLALAFVLFYEAINGFHDTANAVAAVIYTRAMQPQLAVVMAAFFNFFGVLLGGLSVAYAIVHMLPTDLLLNMGSTHGLAMVFSMLLAAIIWNLGTWFFGLPASSSHTLIGAIIGIGLTNALLTGSSVMDALNLREVTKIFSSLIVSPIVGLVIAGGLIFLLRRYWSGTKKRDRIHRIPEDRKKKKGKRKPPFWTRIALIVSAAGVAFSHGANDGQKGIGLVMLVLVGIAPAGFVVNMNASGYEITRTRDAVTNFEHYLQQHPELPQKLIAMEPPLPAASTDGTQVTEFHCHPANTFDAIARVKTMLPGNMESYEPLSVSQRSQLRRIMLCISDTSAKLAKLPGVSKEDQNLLKKLRSDMLSTIEYAPVWIIMAVALALGIGTMIGWRRVAMTIGEKIGKRGMTYAQGMAAQMTAAVSIGLASYIGMPVSTTHVLSSAVAGTMVVDGGGLQRKTVTSILMAWVFTLPAAIFLSGGLYWIALQLI</sequence>
<comment type="function">
    <text evidence="3">Low-affinity inorganic phosphate transporter.</text>
</comment>
<comment type="catalytic activity">
    <reaction evidence="1">
        <text>phosphate(in) + H(+)(in) = phosphate(out) + H(+)(out)</text>
        <dbReference type="Rhea" id="RHEA:29939"/>
        <dbReference type="ChEBI" id="CHEBI:15378"/>
        <dbReference type="ChEBI" id="CHEBI:43474"/>
    </reaction>
</comment>
<comment type="biophysicochemical properties">
    <kinetics>
        <KM evidence="3">28.6 uM for phosphate (at pH 6.6 and 1.8 mM Mg(2+))</KM>
        <KM evidence="3">28.1 uM for phosphate (at pH 7.0 and 10.0 mM Mg(2+))</KM>
        <Vmax evidence="3">33.0 nmol/min/mg enzyme (at pH 6.6 and 1.8 mM Mg(2+))</Vmax>
        <Vmax evidence="3">17.0 nmol/min/mg enzyme (at pH 7.0 and 10.0 mM Mg(2+))</Vmax>
    </kinetics>
</comment>
<comment type="subcellular location">
    <subcellularLocation>
        <location evidence="3 4">Cell inner membrane</location>
        <topology evidence="2">Multi-pass membrane protein</topology>
    </subcellularLocation>
</comment>
<comment type="induction">
    <text evidence="3">May be repressed at low inorganic phosphate levels by the pho regulon.</text>
</comment>
<comment type="disruption phenotype">
    <text evidence="5">Disruption of the gene does not affect tellurite uptake.</text>
</comment>
<comment type="miscellaneous">
    <text evidence="6">The Pit system in E.coli K12 consists of two transporters, PitA and PitB, which can transport phosphate independently of each other. Both proteins may have contributed to the kinetic values and substrate specificities determined in earlier studies.</text>
</comment>
<comment type="similarity">
    <text evidence="7">Belongs to the inorganic phosphate transporter (PiT) (TC 2.A.20) family. Pit subfamily.</text>
</comment>
<protein>
    <recommendedName>
        <fullName>Low-affinity inorganic phosphate transporter PitB</fullName>
    </recommendedName>
</protein>
<dbReference type="EMBL" id="U28377">
    <property type="protein sequence ID" value="AAA69154.1"/>
    <property type="molecule type" value="Genomic_DNA"/>
</dbReference>
<dbReference type="EMBL" id="U00096">
    <property type="protein sequence ID" value="AAC76023.1"/>
    <property type="molecule type" value="Genomic_DNA"/>
</dbReference>
<dbReference type="EMBL" id="AP009048">
    <property type="protein sequence ID" value="BAE77048.1"/>
    <property type="molecule type" value="Genomic_DNA"/>
</dbReference>
<dbReference type="EMBL" id="U23148">
    <property type="protein sequence ID" value="AAC43340.1"/>
    <property type="molecule type" value="Genomic_DNA"/>
</dbReference>
<dbReference type="PIR" id="A65085">
    <property type="entry name" value="A65085"/>
</dbReference>
<dbReference type="RefSeq" id="NP_417461.1">
    <property type="nucleotide sequence ID" value="NC_000913.3"/>
</dbReference>
<dbReference type="RefSeq" id="WP_000933250.1">
    <property type="nucleotide sequence ID" value="NZ_SSZK01000023.1"/>
</dbReference>
<dbReference type="SMR" id="P43676"/>
<dbReference type="BioGRID" id="4261181">
    <property type="interactions" value="20"/>
</dbReference>
<dbReference type="FunCoup" id="P43676">
    <property type="interactions" value="901"/>
</dbReference>
<dbReference type="STRING" id="511145.b2987"/>
<dbReference type="TCDB" id="2.A.20.1.2">
    <property type="family name" value="the inorganic phosphate transporter (pit) family"/>
</dbReference>
<dbReference type="PaxDb" id="511145-b2987"/>
<dbReference type="EnsemblBacteria" id="AAC76023">
    <property type="protein sequence ID" value="AAC76023"/>
    <property type="gene ID" value="b2987"/>
</dbReference>
<dbReference type="GeneID" id="947475"/>
<dbReference type="KEGG" id="ecj:JW2955"/>
<dbReference type="KEGG" id="eco:b2987"/>
<dbReference type="KEGG" id="ecoc:C3026_16340"/>
<dbReference type="PATRIC" id="fig|1411691.4.peg.3743"/>
<dbReference type="EchoBASE" id="EB2721"/>
<dbReference type="eggNOG" id="COG0306">
    <property type="taxonomic scope" value="Bacteria"/>
</dbReference>
<dbReference type="HOGENOM" id="CLU_015355_4_0_6"/>
<dbReference type="InParanoid" id="P43676"/>
<dbReference type="OMA" id="RANPHKA"/>
<dbReference type="OrthoDB" id="9779554at2"/>
<dbReference type="PhylomeDB" id="P43676"/>
<dbReference type="BioCyc" id="EcoCyc:PITB-MONOMER"/>
<dbReference type="BioCyc" id="MetaCyc:PITB-MONOMER"/>
<dbReference type="PRO" id="PR:P43676"/>
<dbReference type="Proteomes" id="UP000000625">
    <property type="component" value="Chromosome"/>
</dbReference>
<dbReference type="GO" id="GO:0016020">
    <property type="term" value="C:membrane"/>
    <property type="evidence" value="ECO:0000314"/>
    <property type="project" value="EcoCyc"/>
</dbReference>
<dbReference type="GO" id="GO:0005886">
    <property type="term" value="C:plasma membrane"/>
    <property type="evidence" value="ECO:0000314"/>
    <property type="project" value="EcoCyc"/>
</dbReference>
<dbReference type="GO" id="GO:0005315">
    <property type="term" value="F:phosphate transmembrane transporter activity"/>
    <property type="evidence" value="ECO:0000315"/>
    <property type="project" value="EcoCyc"/>
</dbReference>
<dbReference type="GO" id="GO:0015293">
    <property type="term" value="F:symporter activity"/>
    <property type="evidence" value="ECO:0007669"/>
    <property type="project" value="UniProtKB-KW"/>
</dbReference>
<dbReference type="GO" id="GO:0035435">
    <property type="term" value="P:phosphate ion transmembrane transport"/>
    <property type="evidence" value="ECO:0000315"/>
    <property type="project" value="EcoCyc"/>
</dbReference>
<dbReference type="InterPro" id="IPR047818">
    <property type="entry name" value="Phos_trans_PitA_PitB"/>
</dbReference>
<dbReference type="InterPro" id="IPR001204">
    <property type="entry name" value="Phos_transporter"/>
</dbReference>
<dbReference type="NCBIfam" id="NF033774">
    <property type="entry name" value="phos_trans_PitA"/>
    <property type="match status" value="1"/>
</dbReference>
<dbReference type="PANTHER" id="PTHR11101:SF65">
    <property type="entry name" value="LOW-AFFINITY INORGANIC PHOSPHATE TRANSPORTER PITA-RELATED"/>
    <property type="match status" value="1"/>
</dbReference>
<dbReference type="PANTHER" id="PTHR11101">
    <property type="entry name" value="PHOSPHATE TRANSPORTER"/>
    <property type="match status" value="1"/>
</dbReference>
<dbReference type="Pfam" id="PF01384">
    <property type="entry name" value="PHO4"/>
    <property type="match status" value="1"/>
</dbReference>
<feature type="chain" id="PRO_0000080785" description="Low-affinity inorganic phosphate transporter PitB">
    <location>
        <begin position="1"/>
        <end position="499"/>
    </location>
</feature>
<feature type="transmembrane region" description="Helical" evidence="2">
    <location>
        <begin position="5"/>
        <end position="25"/>
    </location>
</feature>
<feature type="transmembrane region" description="Helical" evidence="2">
    <location>
        <begin position="52"/>
        <end position="72"/>
    </location>
</feature>
<feature type="transmembrane region" description="Helical" evidence="2">
    <location>
        <begin position="94"/>
        <end position="114"/>
    </location>
</feature>
<feature type="transmembrane region" description="Helical" evidence="2">
    <location>
        <begin position="124"/>
        <end position="144"/>
    </location>
</feature>
<feature type="transmembrane region" description="Helical" evidence="2">
    <location>
        <begin position="155"/>
        <end position="175"/>
    </location>
</feature>
<feature type="transmembrane region" description="Helical" evidence="2">
    <location>
        <begin position="207"/>
        <end position="227"/>
    </location>
</feature>
<feature type="transmembrane region" description="Helical" evidence="2">
    <location>
        <begin position="233"/>
        <end position="253"/>
    </location>
</feature>
<feature type="transmembrane region" description="Helical" evidence="2">
    <location>
        <begin position="382"/>
        <end position="402"/>
    </location>
</feature>
<feature type="transmembrane region" description="Helical" evidence="2">
    <location>
        <begin position="430"/>
        <end position="450"/>
    </location>
</feature>
<feature type="transmembrane region" description="Helical" evidence="2">
    <location>
        <begin position="473"/>
        <end position="493"/>
    </location>
</feature>
<feature type="sequence conflict" description="In Ref. 3; AAC43340." evidence="7" ref="3">
    <original>S</original>
    <variation>C</variation>
    <location>
        <position position="182"/>
    </location>
</feature>
<feature type="sequence conflict" description="In Ref. 3; AAC43340." evidence="7" ref="3">
    <original>A</original>
    <variation>G</variation>
    <location>
        <position position="213"/>
    </location>
</feature>
<accession>P43676</accession>
<accession>Q2M9K8</accession>
<proteinExistence type="evidence at protein level"/>
<evidence type="ECO:0000250" key="1">
    <source>
        <dbReference type="UniProtKB" id="P0AFJ7"/>
    </source>
</evidence>
<evidence type="ECO:0000255" key="2"/>
<evidence type="ECO:0000269" key="3">
    <source>
    </source>
</evidence>
<evidence type="ECO:0000269" key="4">
    <source>
    </source>
</evidence>
<evidence type="ECO:0000269" key="5">
    <source>
    </source>
</evidence>
<evidence type="ECO:0000303" key="6">
    <source>
    </source>
</evidence>
<evidence type="ECO:0000305" key="7"/>
<gene>
    <name evidence="6" type="primary">pitB</name>
    <name type="ordered locus">b2987</name>
    <name type="ordered locus">JW2955</name>
</gene>
<keyword id="KW-0997">Cell inner membrane</keyword>
<keyword id="KW-1003">Cell membrane</keyword>
<keyword id="KW-0472">Membrane</keyword>
<keyword id="KW-0592">Phosphate transport</keyword>
<keyword id="KW-1185">Reference proteome</keyword>
<keyword id="KW-0769">Symport</keyword>
<keyword id="KW-0812">Transmembrane</keyword>
<keyword id="KW-1133">Transmembrane helix</keyword>
<keyword id="KW-0813">Transport</keyword>